<accession>B0CJU0</accession>
<name>PYRD_BRUSI</name>
<reference key="1">
    <citation type="submission" date="2007-12" db="EMBL/GenBank/DDBJ databases">
        <title>Brucella suis ATCC 23445 whole genome shotgun sequencing project.</title>
        <authorList>
            <person name="Setubal J.C."/>
            <person name="Bowns C."/>
            <person name="Boyle S."/>
            <person name="Crasta O.R."/>
            <person name="Czar M.J."/>
            <person name="Dharmanolla C."/>
            <person name="Gillespie J.J."/>
            <person name="Kenyon R.W."/>
            <person name="Lu J."/>
            <person name="Mane S."/>
            <person name="Mohapatra S."/>
            <person name="Nagrani S."/>
            <person name="Purkayastha A."/>
            <person name="Rajasimha H.K."/>
            <person name="Shallom J.M."/>
            <person name="Shallom S."/>
            <person name="Shukla M."/>
            <person name="Snyder E.E."/>
            <person name="Sobral B.W."/>
            <person name="Wattam A.R."/>
            <person name="Will R."/>
            <person name="Williams K."/>
            <person name="Yoo H."/>
            <person name="Bruce D."/>
            <person name="Detter C."/>
            <person name="Munk C."/>
            <person name="Brettin T.S."/>
        </authorList>
    </citation>
    <scope>NUCLEOTIDE SEQUENCE [LARGE SCALE GENOMIC DNA]</scope>
    <source>
        <strain>ATCC 23445 / NCTC 10510</strain>
    </source>
</reference>
<organism>
    <name type="scientific">Brucella suis (strain ATCC 23445 / NCTC 10510)</name>
    <dbReference type="NCBI Taxonomy" id="470137"/>
    <lineage>
        <taxon>Bacteria</taxon>
        <taxon>Pseudomonadati</taxon>
        <taxon>Pseudomonadota</taxon>
        <taxon>Alphaproteobacteria</taxon>
        <taxon>Hyphomicrobiales</taxon>
        <taxon>Brucellaceae</taxon>
        <taxon>Brucella/Ochrobactrum group</taxon>
        <taxon>Brucella</taxon>
    </lineage>
</organism>
<gene>
    <name evidence="1" type="primary">pyrD</name>
    <name type="ordered locus">BSUIS_A0339</name>
</gene>
<keyword id="KW-1003">Cell membrane</keyword>
<keyword id="KW-0285">Flavoprotein</keyword>
<keyword id="KW-0288">FMN</keyword>
<keyword id="KW-0472">Membrane</keyword>
<keyword id="KW-0560">Oxidoreductase</keyword>
<keyword id="KW-0665">Pyrimidine biosynthesis</keyword>
<comment type="function">
    <text evidence="1">Catalyzes the conversion of dihydroorotate to orotate with quinone as electron acceptor.</text>
</comment>
<comment type="catalytic activity">
    <reaction evidence="1">
        <text>(S)-dihydroorotate + a quinone = orotate + a quinol</text>
        <dbReference type="Rhea" id="RHEA:30187"/>
        <dbReference type="ChEBI" id="CHEBI:24646"/>
        <dbReference type="ChEBI" id="CHEBI:30839"/>
        <dbReference type="ChEBI" id="CHEBI:30864"/>
        <dbReference type="ChEBI" id="CHEBI:132124"/>
        <dbReference type="EC" id="1.3.5.2"/>
    </reaction>
</comment>
<comment type="cofactor">
    <cofactor evidence="1">
        <name>FMN</name>
        <dbReference type="ChEBI" id="CHEBI:58210"/>
    </cofactor>
    <text evidence="1">Binds 1 FMN per subunit.</text>
</comment>
<comment type="pathway">
    <text evidence="1">Pyrimidine metabolism; UMP biosynthesis via de novo pathway; orotate from (S)-dihydroorotate (quinone route): step 1/1.</text>
</comment>
<comment type="subunit">
    <text evidence="1">Monomer.</text>
</comment>
<comment type="subcellular location">
    <subcellularLocation>
        <location evidence="1">Cell membrane</location>
        <topology evidence="1">Peripheral membrane protein</topology>
    </subcellularLocation>
</comment>
<comment type="similarity">
    <text evidence="1">Belongs to the dihydroorotate dehydrogenase family. Type 2 subfamily.</text>
</comment>
<proteinExistence type="inferred from homology"/>
<evidence type="ECO:0000255" key="1">
    <source>
        <dbReference type="HAMAP-Rule" id="MF_00225"/>
    </source>
</evidence>
<dbReference type="EC" id="1.3.5.2" evidence="1"/>
<dbReference type="EMBL" id="CP000911">
    <property type="protein sequence ID" value="ABY37431.1"/>
    <property type="molecule type" value="Genomic_DNA"/>
</dbReference>
<dbReference type="RefSeq" id="WP_004687981.1">
    <property type="nucleotide sequence ID" value="NC_010169.1"/>
</dbReference>
<dbReference type="SMR" id="B0CJU0"/>
<dbReference type="KEGG" id="bmt:BSUIS_A0339"/>
<dbReference type="HOGENOM" id="CLU_013640_2_1_5"/>
<dbReference type="UniPathway" id="UPA00070">
    <property type="reaction ID" value="UER00946"/>
</dbReference>
<dbReference type="PRO" id="PR:B0CJU0"/>
<dbReference type="Proteomes" id="UP000008545">
    <property type="component" value="Chromosome I"/>
</dbReference>
<dbReference type="GO" id="GO:0005737">
    <property type="term" value="C:cytoplasm"/>
    <property type="evidence" value="ECO:0007669"/>
    <property type="project" value="InterPro"/>
</dbReference>
<dbReference type="GO" id="GO:0005886">
    <property type="term" value="C:plasma membrane"/>
    <property type="evidence" value="ECO:0007669"/>
    <property type="project" value="UniProtKB-SubCell"/>
</dbReference>
<dbReference type="GO" id="GO:0106430">
    <property type="term" value="F:dihydroorotate dehydrogenase (quinone) activity"/>
    <property type="evidence" value="ECO:0007669"/>
    <property type="project" value="UniProtKB-EC"/>
</dbReference>
<dbReference type="GO" id="GO:0006207">
    <property type="term" value="P:'de novo' pyrimidine nucleobase biosynthetic process"/>
    <property type="evidence" value="ECO:0007669"/>
    <property type="project" value="InterPro"/>
</dbReference>
<dbReference type="GO" id="GO:0044205">
    <property type="term" value="P:'de novo' UMP biosynthetic process"/>
    <property type="evidence" value="ECO:0007669"/>
    <property type="project" value="UniProtKB-UniRule"/>
</dbReference>
<dbReference type="CDD" id="cd04738">
    <property type="entry name" value="DHOD_2_like"/>
    <property type="match status" value="1"/>
</dbReference>
<dbReference type="Gene3D" id="3.20.20.70">
    <property type="entry name" value="Aldolase class I"/>
    <property type="match status" value="1"/>
</dbReference>
<dbReference type="HAMAP" id="MF_00225">
    <property type="entry name" value="DHO_dh_type2"/>
    <property type="match status" value="1"/>
</dbReference>
<dbReference type="InterPro" id="IPR013785">
    <property type="entry name" value="Aldolase_TIM"/>
</dbReference>
<dbReference type="InterPro" id="IPR050074">
    <property type="entry name" value="DHO_dehydrogenase"/>
</dbReference>
<dbReference type="InterPro" id="IPR005719">
    <property type="entry name" value="Dihydroorotate_DH_2"/>
</dbReference>
<dbReference type="InterPro" id="IPR005720">
    <property type="entry name" value="Dihydroorotate_DH_cat"/>
</dbReference>
<dbReference type="InterPro" id="IPR001295">
    <property type="entry name" value="Dihydroorotate_DH_CS"/>
</dbReference>
<dbReference type="NCBIfam" id="NF003645">
    <property type="entry name" value="PRK05286.1-2"/>
    <property type="match status" value="1"/>
</dbReference>
<dbReference type="NCBIfam" id="NF003652">
    <property type="entry name" value="PRK05286.2-5"/>
    <property type="match status" value="1"/>
</dbReference>
<dbReference type="NCBIfam" id="TIGR01036">
    <property type="entry name" value="pyrD_sub2"/>
    <property type="match status" value="1"/>
</dbReference>
<dbReference type="PANTHER" id="PTHR48109:SF4">
    <property type="entry name" value="DIHYDROOROTATE DEHYDROGENASE (QUINONE), MITOCHONDRIAL"/>
    <property type="match status" value="1"/>
</dbReference>
<dbReference type="PANTHER" id="PTHR48109">
    <property type="entry name" value="DIHYDROOROTATE DEHYDROGENASE (QUINONE), MITOCHONDRIAL-RELATED"/>
    <property type="match status" value="1"/>
</dbReference>
<dbReference type="Pfam" id="PF01180">
    <property type="entry name" value="DHO_dh"/>
    <property type="match status" value="1"/>
</dbReference>
<dbReference type="SUPFAM" id="SSF51395">
    <property type="entry name" value="FMN-linked oxidoreductases"/>
    <property type="match status" value="1"/>
</dbReference>
<dbReference type="PROSITE" id="PS00911">
    <property type="entry name" value="DHODEHASE_1"/>
    <property type="match status" value="1"/>
</dbReference>
<dbReference type="PROSITE" id="PS00912">
    <property type="entry name" value="DHODEHASE_2"/>
    <property type="match status" value="1"/>
</dbReference>
<sequence length="364" mass="39272">MSGLFETLGRRALFTFDAEQAHGLSITGLKTGIVTCRTPEDPALSVKVAGLKFPNPLGMAAGYDKNAEVPDALLKLGFGFAEVGTLTPRPQSGNPRPRIFRLVDDKAVINRLGFNNEGHEAAFKRLSRRAGKSGIVGVNIGANKDAEDRIADYVAGIRRFYQLARYFTVNISSPNTPGLRNLQAREALHELLSRVLEARDEEGNMCTLKRPVFLKIAPDLTDEELDDIAAEADAQKLDGIIVSNTTLSRSGLKNPENSNETGGLSGAPLFERSTVVLARMRERVGPDMPLIGVGGIDSAETALAKIKAGADLVQLYTGLIYRGPGLPGEILRGLSTAIKHEGVSSIAELRDRDTKEWAARKLIS</sequence>
<feature type="chain" id="PRO_1000078155" description="Dihydroorotate dehydrogenase (quinone)">
    <location>
        <begin position="1"/>
        <end position="364"/>
    </location>
</feature>
<feature type="active site" description="Nucleophile" evidence="1">
    <location>
        <position position="173"/>
    </location>
</feature>
<feature type="binding site" evidence="1">
    <location>
        <begin position="61"/>
        <end position="65"/>
    </location>
    <ligand>
        <name>FMN</name>
        <dbReference type="ChEBI" id="CHEBI:58210"/>
    </ligand>
</feature>
<feature type="binding site" evidence="1">
    <location>
        <position position="65"/>
    </location>
    <ligand>
        <name>substrate</name>
    </ligand>
</feature>
<feature type="binding site" evidence="1">
    <location>
        <position position="85"/>
    </location>
    <ligand>
        <name>FMN</name>
        <dbReference type="ChEBI" id="CHEBI:58210"/>
    </ligand>
</feature>
<feature type="binding site" evidence="1">
    <location>
        <begin position="110"/>
        <end position="114"/>
    </location>
    <ligand>
        <name>substrate</name>
    </ligand>
</feature>
<feature type="binding site" evidence="1">
    <location>
        <position position="139"/>
    </location>
    <ligand>
        <name>FMN</name>
        <dbReference type="ChEBI" id="CHEBI:58210"/>
    </ligand>
</feature>
<feature type="binding site" evidence="1">
    <location>
        <position position="170"/>
    </location>
    <ligand>
        <name>FMN</name>
        <dbReference type="ChEBI" id="CHEBI:58210"/>
    </ligand>
</feature>
<feature type="binding site" evidence="1">
    <location>
        <position position="170"/>
    </location>
    <ligand>
        <name>substrate</name>
    </ligand>
</feature>
<feature type="binding site" evidence="1">
    <location>
        <position position="175"/>
    </location>
    <ligand>
        <name>substrate</name>
    </ligand>
</feature>
<feature type="binding site" evidence="1">
    <location>
        <position position="215"/>
    </location>
    <ligand>
        <name>FMN</name>
        <dbReference type="ChEBI" id="CHEBI:58210"/>
    </ligand>
</feature>
<feature type="binding site" evidence="1">
    <location>
        <position position="243"/>
    </location>
    <ligand>
        <name>FMN</name>
        <dbReference type="ChEBI" id="CHEBI:58210"/>
    </ligand>
</feature>
<feature type="binding site" evidence="1">
    <location>
        <begin position="244"/>
        <end position="245"/>
    </location>
    <ligand>
        <name>substrate</name>
    </ligand>
</feature>
<feature type="binding site" evidence="1">
    <location>
        <position position="266"/>
    </location>
    <ligand>
        <name>FMN</name>
        <dbReference type="ChEBI" id="CHEBI:58210"/>
    </ligand>
</feature>
<feature type="binding site" evidence="1">
    <location>
        <position position="295"/>
    </location>
    <ligand>
        <name>FMN</name>
        <dbReference type="ChEBI" id="CHEBI:58210"/>
    </ligand>
</feature>
<feature type="binding site" evidence="1">
    <location>
        <begin position="316"/>
        <end position="317"/>
    </location>
    <ligand>
        <name>FMN</name>
        <dbReference type="ChEBI" id="CHEBI:58210"/>
    </ligand>
</feature>
<protein>
    <recommendedName>
        <fullName evidence="1">Dihydroorotate dehydrogenase (quinone)</fullName>
        <ecNumber evidence="1">1.3.5.2</ecNumber>
    </recommendedName>
    <alternativeName>
        <fullName evidence="1">DHOdehase</fullName>
        <shortName evidence="1">DHOD</shortName>
        <shortName evidence="1">DHODase</shortName>
    </alternativeName>
    <alternativeName>
        <fullName evidence="1">Dihydroorotate oxidase</fullName>
    </alternativeName>
</protein>